<keyword id="KW-0479">Metal-binding</keyword>
<keyword id="KW-0520">NAD</keyword>
<keyword id="KW-0560">Oxidoreductase</keyword>
<gene>
    <name evidence="1" type="primary">maeA</name>
    <name type="ordered locus">SEN1489</name>
</gene>
<comment type="catalytic activity">
    <reaction evidence="1">
        <text>(S)-malate + NAD(+) = pyruvate + CO2 + NADH</text>
        <dbReference type="Rhea" id="RHEA:12653"/>
        <dbReference type="ChEBI" id="CHEBI:15361"/>
        <dbReference type="ChEBI" id="CHEBI:15589"/>
        <dbReference type="ChEBI" id="CHEBI:16526"/>
        <dbReference type="ChEBI" id="CHEBI:57540"/>
        <dbReference type="ChEBI" id="CHEBI:57945"/>
        <dbReference type="EC" id="1.1.1.38"/>
    </reaction>
</comment>
<comment type="catalytic activity">
    <reaction evidence="1">
        <text>oxaloacetate + H(+) = pyruvate + CO2</text>
        <dbReference type="Rhea" id="RHEA:15641"/>
        <dbReference type="ChEBI" id="CHEBI:15361"/>
        <dbReference type="ChEBI" id="CHEBI:15378"/>
        <dbReference type="ChEBI" id="CHEBI:16452"/>
        <dbReference type="ChEBI" id="CHEBI:16526"/>
        <dbReference type="EC" id="1.1.1.38"/>
    </reaction>
</comment>
<comment type="cofactor">
    <cofactor evidence="1">
        <name>Mg(2+)</name>
        <dbReference type="ChEBI" id="CHEBI:18420"/>
    </cofactor>
    <cofactor evidence="1">
        <name>Mn(2+)</name>
        <dbReference type="ChEBI" id="CHEBI:29035"/>
    </cofactor>
    <text evidence="1">Divalent metal cations. Prefers magnesium or manganese.</text>
</comment>
<comment type="subunit">
    <text evidence="1">Homotetramer.</text>
</comment>
<comment type="similarity">
    <text evidence="1">Belongs to the malic enzymes family.</text>
</comment>
<evidence type="ECO:0000255" key="1">
    <source>
        <dbReference type="HAMAP-Rule" id="MF_01619"/>
    </source>
</evidence>
<accession>B5QTN6</accession>
<dbReference type="EC" id="1.1.1.38" evidence="1"/>
<dbReference type="EMBL" id="AM933172">
    <property type="protein sequence ID" value="CAR33068.1"/>
    <property type="molecule type" value="Genomic_DNA"/>
</dbReference>
<dbReference type="RefSeq" id="WP_000447951.1">
    <property type="nucleotide sequence ID" value="NC_011294.1"/>
</dbReference>
<dbReference type="SMR" id="B5QTN6"/>
<dbReference type="KEGG" id="set:SEN1489"/>
<dbReference type="HOGENOM" id="CLU_011405_5_2_6"/>
<dbReference type="Proteomes" id="UP000000613">
    <property type="component" value="Chromosome"/>
</dbReference>
<dbReference type="GO" id="GO:0005829">
    <property type="term" value="C:cytosol"/>
    <property type="evidence" value="ECO:0007669"/>
    <property type="project" value="TreeGrafter"/>
</dbReference>
<dbReference type="GO" id="GO:0004471">
    <property type="term" value="F:malate dehydrogenase (decarboxylating) (NAD+) activity"/>
    <property type="evidence" value="ECO:0007669"/>
    <property type="project" value="UniProtKB-UniRule"/>
</dbReference>
<dbReference type="GO" id="GO:0046872">
    <property type="term" value="F:metal ion binding"/>
    <property type="evidence" value="ECO:0007669"/>
    <property type="project" value="UniProtKB-KW"/>
</dbReference>
<dbReference type="GO" id="GO:0051287">
    <property type="term" value="F:NAD binding"/>
    <property type="evidence" value="ECO:0007669"/>
    <property type="project" value="InterPro"/>
</dbReference>
<dbReference type="GO" id="GO:0008948">
    <property type="term" value="F:oxaloacetate decarboxylase activity"/>
    <property type="evidence" value="ECO:0007669"/>
    <property type="project" value="UniProtKB-UniRule"/>
</dbReference>
<dbReference type="GO" id="GO:0006108">
    <property type="term" value="P:malate metabolic process"/>
    <property type="evidence" value="ECO:0007669"/>
    <property type="project" value="TreeGrafter"/>
</dbReference>
<dbReference type="CDD" id="cd05312">
    <property type="entry name" value="NAD_bind_1_malic_enz"/>
    <property type="match status" value="1"/>
</dbReference>
<dbReference type="FunFam" id="3.40.50.10380:FF:000001">
    <property type="entry name" value="NAD-dependent malic enzyme"/>
    <property type="match status" value="1"/>
</dbReference>
<dbReference type="FunFam" id="3.40.50.720:FF:000055">
    <property type="entry name" value="NAD-dependent malic enzyme"/>
    <property type="match status" value="1"/>
</dbReference>
<dbReference type="Gene3D" id="3.40.50.10380">
    <property type="entry name" value="Malic enzyme, N-terminal domain"/>
    <property type="match status" value="1"/>
</dbReference>
<dbReference type="Gene3D" id="3.40.50.720">
    <property type="entry name" value="NAD(P)-binding Rossmann-like Domain"/>
    <property type="match status" value="1"/>
</dbReference>
<dbReference type="HAMAP" id="MF_01619">
    <property type="entry name" value="NAD_malic_enz"/>
    <property type="match status" value="1"/>
</dbReference>
<dbReference type="InterPro" id="IPR046346">
    <property type="entry name" value="Aminoacid_DH-like_N_sf"/>
</dbReference>
<dbReference type="InterPro" id="IPR015884">
    <property type="entry name" value="Malic_enzyme_CS"/>
</dbReference>
<dbReference type="InterPro" id="IPR012301">
    <property type="entry name" value="Malic_N_dom"/>
</dbReference>
<dbReference type="InterPro" id="IPR037062">
    <property type="entry name" value="Malic_N_dom_sf"/>
</dbReference>
<dbReference type="InterPro" id="IPR012302">
    <property type="entry name" value="Malic_NAD-bd"/>
</dbReference>
<dbReference type="InterPro" id="IPR001891">
    <property type="entry name" value="Malic_OxRdtase"/>
</dbReference>
<dbReference type="InterPro" id="IPR036291">
    <property type="entry name" value="NAD(P)-bd_dom_sf"/>
</dbReference>
<dbReference type="InterPro" id="IPR023667">
    <property type="entry name" value="NAD_malic_enz_proteobac"/>
</dbReference>
<dbReference type="NCBIfam" id="NF010052">
    <property type="entry name" value="PRK13529.1"/>
    <property type="match status" value="1"/>
</dbReference>
<dbReference type="PANTHER" id="PTHR23406">
    <property type="entry name" value="MALIC ENZYME-RELATED"/>
    <property type="match status" value="1"/>
</dbReference>
<dbReference type="PANTHER" id="PTHR23406:SF34">
    <property type="entry name" value="NAD-DEPENDENT MALIC ENZYME, MITOCHONDRIAL"/>
    <property type="match status" value="1"/>
</dbReference>
<dbReference type="Pfam" id="PF00390">
    <property type="entry name" value="malic"/>
    <property type="match status" value="1"/>
</dbReference>
<dbReference type="Pfam" id="PF03949">
    <property type="entry name" value="Malic_M"/>
    <property type="match status" value="1"/>
</dbReference>
<dbReference type="PIRSF" id="PIRSF000106">
    <property type="entry name" value="ME"/>
    <property type="match status" value="1"/>
</dbReference>
<dbReference type="PRINTS" id="PR00072">
    <property type="entry name" value="MALOXRDTASE"/>
</dbReference>
<dbReference type="SMART" id="SM01274">
    <property type="entry name" value="malic"/>
    <property type="match status" value="1"/>
</dbReference>
<dbReference type="SMART" id="SM00919">
    <property type="entry name" value="Malic_M"/>
    <property type="match status" value="1"/>
</dbReference>
<dbReference type="SUPFAM" id="SSF53223">
    <property type="entry name" value="Aminoacid dehydrogenase-like, N-terminal domain"/>
    <property type="match status" value="1"/>
</dbReference>
<dbReference type="SUPFAM" id="SSF51735">
    <property type="entry name" value="NAD(P)-binding Rossmann-fold domains"/>
    <property type="match status" value="1"/>
</dbReference>
<dbReference type="PROSITE" id="PS00331">
    <property type="entry name" value="MALIC_ENZYMES"/>
    <property type="match status" value="1"/>
</dbReference>
<protein>
    <recommendedName>
        <fullName evidence="1">NAD-dependent malic enzyme</fullName>
        <shortName evidence="1">NAD-ME</shortName>
        <ecNumber evidence="1">1.1.1.38</ecNumber>
    </recommendedName>
</protein>
<feature type="chain" id="PRO_1000186005" description="NAD-dependent malic enzyme">
    <location>
        <begin position="1"/>
        <end position="565"/>
    </location>
</feature>
<feature type="active site" description="Proton donor" evidence="1">
    <location>
        <position position="104"/>
    </location>
</feature>
<feature type="active site" description="Proton acceptor" evidence="1">
    <location>
        <position position="175"/>
    </location>
</feature>
<feature type="binding site" evidence="1">
    <location>
        <position position="157"/>
    </location>
    <ligand>
        <name>NAD(+)</name>
        <dbReference type="ChEBI" id="CHEBI:57540"/>
    </ligand>
</feature>
<feature type="binding site" evidence="1">
    <location>
        <position position="246"/>
    </location>
    <ligand>
        <name>a divalent metal cation</name>
        <dbReference type="ChEBI" id="CHEBI:60240"/>
    </ligand>
</feature>
<feature type="binding site" evidence="1">
    <location>
        <position position="247"/>
    </location>
    <ligand>
        <name>a divalent metal cation</name>
        <dbReference type="ChEBI" id="CHEBI:60240"/>
    </ligand>
</feature>
<feature type="binding site" evidence="1">
    <location>
        <position position="270"/>
    </location>
    <ligand>
        <name>a divalent metal cation</name>
        <dbReference type="ChEBI" id="CHEBI:60240"/>
    </ligand>
</feature>
<feature type="binding site" evidence="1">
    <location>
        <position position="270"/>
    </location>
    <ligand>
        <name>NAD(+)</name>
        <dbReference type="ChEBI" id="CHEBI:57540"/>
    </ligand>
</feature>
<feature type="binding site" evidence="1">
    <location>
        <position position="418"/>
    </location>
    <ligand>
        <name>NAD(+)</name>
        <dbReference type="ChEBI" id="CHEBI:57540"/>
    </ligand>
</feature>
<feature type="site" description="Important for activity" evidence="1">
    <location>
        <position position="270"/>
    </location>
</feature>
<organism>
    <name type="scientific">Salmonella enteritidis PT4 (strain P125109)</name>
    <dbReference type="NCBI Taxonomy" id="550537"/>
    <lineage>
        <taxon>Bacteria</taxon>
        <taxon>Pseudomonadati</taxon>
        <taxon>Pseudomonadota</taxon>
        <taxon>Gammaproteobacteria</taxon>
        <taxon>Enterobacterales</taxon>
        <taxon>Enterobacteriaceae</taxon>
        <taxon>Salmonella</taxon>
    </lineage>
</organism>
<reference key="1">
    <citation type="journal article" date="2008" name="Genome Res.">
        <title>Comparative genome analysis of Salmonella enteritidis PT4 and Salmonella gallinarum 287/91 provides insights into evolutionary and host adaptation pathways.</title>
        <authorList>
            <person name="Thomson N.R."/>
            <person name="Clayton D.J."/>
            <person name="Windhorst D."/>
            <person name="Vernikos G."/>
            <person name="Davidson S."/>
            <person name="Churcher C."/>
            <person name="Quail M.A."/>
            <person name="Stevens M."/>
            <person name="Jones M.A."/>
            <person name="Watson M."/>
            <person name="Barron A."/>
            <person name="Layton A."/>
            <person name="Pickard D."/>
            <person name="Kingsley R.A."/>
            <person name="Bignell A."/>
            <person name="Clark L."/>
            <person name="Harris B."/>
            <person name="Ormond D."/>
            <person name="Abdellah Z."/>
            <person name="Brooks K."/>
            <person name="Cherevach I."/>
            <person name="Chillingworth T."/>
            <person name="Woodward J."/>
            <person name="Norberczak H."/>
            <person name="Lord A."/>
            <person name="Arrowsmith C."/>
            <person name="Jagels K."/>
            <person name="Moule S."/>
            <person name="Mungall K."/>
            <person name="Saunders M."/>
            <person name="Whitehead S."/>
            <person name="Chabalgoity J.A."/>
            <person name="Maskell D."/>
            <person name="Humphreys T."/>
            <person name="Roberts M."/>
            <person name="Barrow P.A."/>
            <person name="Dougan G."/>
            <person name="Parkhill J."/>
        </authorList>
    </citation>
    <scope>NUCLEOTIDE SEQUENCE [LARGE SCALE GENOMIC DNA]</scope>
    <source>
        <strain>P125109</strain>
    </source>
</reference>
<sequence>METITKKARSLYIPYAGPVLLEFPLLNKGSAFSVEERRNFNLSGLLPEVVESIEEQAERAWLQYQGFKTEIDKHIYLRNIQDTNETLFYRLVQNHLEEMMPVIYTPTVGAACERFSEIYRRARGVFISYPNRHNMDDILQNVPNHNIKVIVVTDGERILGLGDQGIGGMGIPIGKLSLYTACGGISPAYTLPVVLDVGTNNQQLLNDPLYMGWRHPRITDDEYYAFVDEFIQAVKQRWPDILLQFEDFAQKNAMPLLTRYRDEICSFNDDIQGTAAVTVGTLIAASRAAGSQLSEQKIVFLGAGSAGCGIAEQIIAQTQREGLSEDAARQNVFMVDRFGLLTDRMPNLLPFQAKLVQKCDNLQHWDTENDVLSLLDVVRNVKPDILIGVSGQTGLFTEEIIREMHKHCPRPIVMPLSNPTSRVEATPQDIIAWTEGNALVATGSPFSPVIWKDKIYPIAQCNNAYIFPGIGLGVIASGASRITDEMLMSASETLAKHSPLVNNGEGLVLPALKDIQVVSRAIAFAVGKMAQQQGVAVKTSAEALQQAIDDNFWKPEYRDYRRTSI</sequence>
<name>MAO1_SALEP</name>
<proteinExistence type="inferred from homology"/>